<proteinExistence type="inferred from homology"/>
<reference key="1">
    <citation type="journal article" date="2007" name="PLoS Genet.">
        <title>Patterns and implications of gene gain and loss in the evolution of Prochlorococcus.</title>
        <authorList>
            <person name="Kettler G.C."/>
            <person name="Martiny A.C."/>
            <person name="Huang K."/>
            <person name="Zucker J."/>
            <person name="Coleman M.L."/>
            <person name="Rodrigue S."/>
            <person name="Chen F."/>
            <person name="Lapidus A."/>
            <person name="Ferriera S."/>
            <person name="Johnson J."/>
            <person name="Steglich C."/>
            <person name="Church G.M."/>
            <person name="Richardson P."/>
            <person name="Chisholm S.W."/>
        </authorList>
    </citation>
    <scope>NUCLEOTIDE SEQUENCE [LARGE SCALE GENOMIC DNA]</scope>
    <source>
        <strain>MIT 9215</strain>
    </source>
</reference>
<dbReference type="EC" id="6.3.3.1" evidence="1"/>
<dbReference type="EMBL" id="CP000825">
    <property type="protein sequence ID" value="ABV51475.1"/>
    <property type="molecule type" value="Genomic_DNA"/>
</dbReference>
<dbReference type="RefSeq" id="WP_012008476.1">
    <property type="nucleotide sequence ID" value="NC_009840.1"/>
</dbReference>
<dbReference type="SMR" id="A8G794"/>
<dbReference type="STRING" id="93060.P9215_18621"/>
<dbReference type="KEGG" id="pmh:P9215_18621"/>
<dbReference type="eggNOG" id="COG0150">
    <property type="taxonomic scope" value="Bacteria"/>
</dbReference>
<dbReference type="HOGENOM" id="CLU_047116_0_0_3"/>
<dbReference type="OrthoDB" id="9802507at2"/>
<dbReference type="UniPathway" id="UPA00074">
    <property type="reaction ID" value="UER00129"/>
</dbReference>
<dbReference type="Proteomes" id="UP000002014">
    <property type="component" value="Chromosome"/>
</dbReference>
<dbReference type="GO" id="GO:0005829">
    <property type="term" value="C:cytosol"/>
    <property type="evidence" value="ECO:0007669"/>
    <property type="project" value="TreeGrafter"/>
</dbReference>
<dbReference type="GO" id="GO:0005524">
    <property type="term" value="F:ATP binding"/>
    <property type="evidence" value="ECO:0007669"/>
    <property type="project" value="UniProtKB-KW"/>
</dbReference>
<dbReference type="GO" id="GO:0004637">
    <property type="term" value="F:phosphoribosylamine-glycine ligase activity"/>
    <property type="evidence" value="ECO:0007669"/>
    <property type="project" value="TreeGrafter"/>
</dbReference>
<dbReference type="GO" id="GO:0004641">
    <property type="term" value="F:phosphoribosylformylglycinamidine cyclo-ligase activity"/>
    <property type="evidence" value="ECO:0007669"/>
    <property type="project" value="UniProtKB-UniRule"/>
</dbReference>
<dbReference type="GO" id="GO:0006189">
    <property type="term" value="P:'de novo' IMP biosynthetic process"/>
    <property type="evidence" value="ECO:0007669"/>
    <property type="project" value="UniProtKB-UniRule"/>
</dbReference>
<dbReference type="GO" id="GO:0046084">
    <property type="term" value="P:adenine biosynthetic process"/>
    <property type="evidence" value="ECO:0007669"/>
    <property type="project" value="TreeGrafter"/>
</dbReference>
<dbReference type="CDD" id="cd02196">
    <property type="entry name" value="PurM"/>
    <property type="match status" value="1"/>
</dbReference>
<dbReference type="FunFam" id="3.30.1330.10:FF:000001">
    <property type="entry name" value="Phosphoribosylformylglycinamidine cyclo-ligase"/>
    <property type="match status" value="1"/>
</dbReference>
<dbReference type="FunFam" id="3.90.650.10:FF:000011">
    <property type="entry name" value="Phosphoribosylformylglycinamidine cyclo-ligase"/>
    <property type="match status" value="1"/>
</dbReference>
<dbReference type="Gene3D" id="3.90.650.10">
    <property type="entry name" value="PurM-like C-terminal domain"/>
    <property type="match status" value="1"/>
</dbReference>
<dbReference type="Gene3D" id="3.30.1330.10">
    <property type="entry name" value="PurM-like, N-terminal domain"/>
    <property type="match status" value="1"/>
</dbReference>
<dbReference type="HAMAP" id="MF_00741">
    <property type="entry name" value="AIRS"/>
    <property type="match status" value="1"/>
</dbReference>
<dbReference type="InterPro" id="IPR010918">
    <property type="entry name" value="PurM-like_C_dom"/>
</dbReference>
<dbReference type="InterPro" id="IPR036676">
    <property type="entry name" value="PurM-like_C_sf"/>
</dbReference>
<dbReference type="InterPro" id="IPR016188">
    <property type="entry name" value="PurM-like_N"/>
</dbReference>
<dbReference type="InterPro" id="IPR036921">
    <property type="entry name" value="PurM-like_N_sf"/>
</dbReference>
<dbReference type="InterPro" id="IPR004733">
    <property type="entry name" value="PurM_cligase"/>
</dbReference>
<dbReference type="NCBIfam" id="TIGR00878">
    <property type="entry name" value="purM"/>
    <property type="match status" value="1"/>
</dbReference>
<dbReference type="PANTHER" id="PTHR10520:SF12">
    <property type="entry name" value="TRIFUNCTIONAL PURINE BIOSYNTHETIC PROTEIN ADENOSINE-3"/>
    <property type="match status" value="1"/>
</dbReference>
<dbReference type="PANTHER" id="PTHR10520">
    <property type="entry name" value="TRIFUNCTIONAL PURINE BIOSYNTHETIC PROTEIN ADENOSINE-3-RELATED"/>
    <property type="match status" value="1"/>
</dbReference>
<dbReference type="Pfam" id="PF00586">
    <property type="entry name" value="AIRS"/>
    <property type="match status" value="1"/>
</dbReference>
<dbReference type="Pfam" id="PF02769">
    <property type="entry name" value="AIRS_C"/>
    <property type="match status" value="1"/>
</dbReference>
<dbReference type="SUPFAM" id="SSF56042">
    <property type="entry name" value="PurM C-terminal domain-like"/>
    <property type="match status" value="1"/>
</dbReference>
<dbReference type="SUPFAM" id="SSF55326">
    <property type="entry name" value="PurM N-terminal domain-like"/>
    <property type="match status" value="1"/>
</dbReference>
<organism>
    <name type="scientific">Prochlorococcus marinus (strain MIT 9215)</name>
    <dbReference type="NCBI Taxonomy" id="93060"/>
    <lineage>
        <taxon>Bacteria</taxon>
        <taxon>Bacillati</taxon>
        <taxon>Cyanobacteriota</taxon>
        <taxon>Cyanophyceae</taxon>
        <taxon>Synechococcales</taxon>
        <taxon>Prochlorococcaceae</taxon>
        <taxon>Prochlorococcus</taxon>
    </lineage>
</organism>
<feature type="chain" id="PRO_1000062162" description="Phosphoribosylformylglycinamidine cyclo-ligase">
    <location>
        <begin position="1"/>
        <end position="347"/>
    </location>
</feature>
<accession>A8G794</accession>
<keyword id="KW-0067">ATP-binding</keyword>
<keyword id="KW-0963">Cytoplasm</keyword>
<keyword id="KW-0436">Ligase</keyword>
<keyword id="KW-0547">Nucleotide-binding</keyword>
<keyword id="KW-0658">Purine biosynthesis</keyword>
<name>PUR5_PROM2</name>
<sequence>MDYKTSGVDIEAGREFVSEIKQAVEGTHTSNVIEGIGGFGGLFRIPIDSFKKPVLVSGTDGVGTKLELAQSKNFHFEVGIDLVAMCINDIITSGAKPLFFLDYIATGKLDKKQLLRVVQGISHGCGENNCSLLGGETAEMPGFYSKNKYDLAGFCVGIVDEDKLINGKKVSENDLIIALKSNGVHSNGFSLVRKIIQNNNQIEKEFEKVSHLSFYDELLKPTKIYNNVIGQILSEDIEIKAMSHITGGGIPENLPRCIPSDFIPYINTNSWEIPILFEFLKKIGSIPEKDFWNTFNLGVGFCLIIDKQFKDRIYNICKDHDIDSWEIGKIVRKDNATISKFLPEILT</sequence>
<evidence type="ECO:0000255" key="1">
    <source>
        <dbReference type="HAMAP-Rule" id="MF_00741"/>
    </source>
</evidence>
<comment type="catalytic activity">
    <reaction evidence="1">
        <text>2-formamido-N(1)-(5-O-phospho-beta-D-ribosyl)acetamidine + ATP = 5-amino-1-(5-phospho-beta-D-ribosyl)imidazole + ADP + phosphate + H(+)</text>
        <dbReference type="Rhea" id="RHEA:23032"/>
        <dbReference type="ChEBI" id="CHEBI:15378"/>
        <dbReference type="ChEBI" id="CHEBI:30616"/>
        <dbReference type="ChEBI" id="CHEBI:43474"/>
        <dbReference type="ChEBI" id="CHEBI:137981"/>
        <dbReference type="ChEBI" id="CHEBI:147287"/>
        <dbReference type="ChEBI" id="CHEBI:456216"/>
        <dbReference type="EC" id="6.3.3.1"/>
    </reaction>
</comment>
<comment type="pathway">
    <text evidence="1">Purine metabolism; IMP biosynthesis via de novo pathway; 5-amino-1-(5-phospho-D-ribosyl)imidazole from N(2)-formyl-N(1)-(5-phospho-D-ribosyl)glycinamide: step 2/2.</text>
</comment>
<comment type="subcellular location">
    <subcellularLocation>
        <location evidence="1">Cytoplasm</location>
    </subcellularLocation>
</comment>
<comment type="similarity">
    <text evidence="1">Belongs to the AIR synthase family.</text>
</comment>
<gene>
    <name evidence="1" type="primary">purM</name>
    <name type="ordered locus">P9215_18621</name>
</gene>
<protein>
    <recommendedName>
        <fullName evidence="1">Phosphoribosylformylglycinamidine cyclo-ligase</fullName>
        <ecNumber evidence="1">6.3.3.1</ecNumber>
    </recommendedName>
    <alternativeName>
        <fullName evidence="1">AIR synthase</fullName>
    </alternativeName>
    <alternativeName>
        <fullName evidence="1">AIRS</fullName>
    </alternativeName>
    <alternativeName>
        <fullName evidence="1">Phosphoribosyl-aminoimidazole synthetase</fullName>
    </alternativeName>
</protein>